<keyword id="KW-0028">Amino-acid biosynthesis</keyword>
<keyword id="KW-0057">Aromatic amino acid biosynthesis</keyword>
<keyword id="KW-0456">Lyase</keyword>
<protein>
    <recommendedName>
        <fullName evidence="1">3-dehydroquinate dehydratase</fullName>
        <shortName evidence="1">3-dehydroquinase</shortName>
        <ecNumber evidence="1">4.2.1.10</ecNumber>
    </recommendedName>
    <alternativeName>
        <fullName evidence="1">Type II DHQase</fullName>
    </alternativeName>
</protein>
<evidence type="ECO:0000255" key="1">
    <source>
        <dbReference type="HAMAP-Rule" id="MF_00169"/>
    </source>
</evidence>
<accession>A6Q936</accession>
<gene>
    <name evidence="1" type="primary">aroQ</name>
    <name type="ordered locus">SUN_1038</name>
</gene>
<name>AROQ_SULNB</name>
<reference key="1">
    <citation type="journal article" date="2007" name="Proc. Natl. Acad. Sci. U.S.A.">
        <title>Deep-sea vent epsilon-proteobacterial genomes provide insights into emergence of pathogens.</title>
        <authorList>
            <person name="Nakagawa S."/>
            <person name="Takaki Y."/>
            <person name="Shimamura S."/>
            <person name="Reysenbach A.-L."/>
            <person name="Takai K."/>
            <person name="Horikoshi K."/>
        </authorList>
    </citation>
    <scope>NUCLEOTIDE SEQUENCE [LARGE SCALE GENOMIC DNA]</scope>
    <source>
        <strain>NBC37-1</strain>
    </source>
</reference>
<dbReference type="EC" id="4.2.1.10" evidence="1"/>
<dbReference type="EMBL" id="AP009179">
    <property type="protein sequence ID" value="BAF71995.1"/>
    <property type="molecule type" value="Genomic_DNA"/>
</dbReference>
<dbReference type="RefSeq" id="WP_011980728.1">
    <property type="nucleotide sequence ID" value="NC_009663.1"/>
</dbReference>
<dbReference type="SMR" id="A6Q936"/>
<dbReference type="STRING" id="387093.SUN_1038"/>
<dbReference type="KEGG" id="sun:SUN_1038"/>
<dbReference type="eggNOG" id="COG0757">
    <property type="taxonomic scope" value="Bacteria"/>
</dbReference>
<dbReference type="HOGENOM" id="CLU_090968_1_0_7"/>
<dbReference type="OrthoDB" id="9790793at2"/>
<dbReference type="UniPathway" id="UPA00053">
    <property type="reaction ID" value="UER00086"/>
</dbReference>
<dbReference type="Proteomes" id="UP000006378">
    <property type="component" value="Chromosome"/>
</dbReference>
<dbReference type="GO" id="GO:0003855">
    <property type="term" value="F:3-dehydroquinate dehydratase activity"/>
    <property type="evidence" value="ECO:0007669"/>
    <property type="project" value="UniProtKB-UniRule"/>
</dbReference>
<dbReference type="GO" id="GO:0008652">
    <property type="term" value="P:amino acid biosynthetic process"/>
    <property type="evidence" value="ECO:0007669"/>
    <property type="project" value="UniProtKB-KW"/>
</dbReference>
<dbReference type="GO" id="GO:0009073">
    <property type="term" value="P:aromatic amino acid family biosynthetic process"/>
    <property type="evidence" value="ECO:0007669"/>
    <property type="project" value="UniProtKB-KW"/>
</dbReference>
<dbReference type="GO" id="GO:0009423">
    <property type="term" value="P:chorismate biosynthetic process"/>
    <property type="evidence" value="ECO:0007669"/>
    <property type="project" value="UniProtKB-UniRule"/>
</dbReference>
<dbReference type="GO" id="GO:0019631">
    <property type="term" value="P:quinate catabolic process"/>
    <property type="evidence" value="ECO:0007669"/>
    <property type="project" value="TreeGrafter"/>
</dbReference>
<dbReference type="CDD" id="cd00466">
    <property type="entry name" value="DHQase_II"/>
    <property type="match status" value="1"/>
</dbReference>
<dbReference type="Gene3D" id="3.40.50.9100">
    <property type="entry name" value="Dehydroquinase, class II"/>
    <property type="match status" value="1"/>
</dbReference>
<dbReference type="HAMAP" id="MF_00169">
    <property type="entry name" value="AroQ"/>
    <property type="match status" value="1"/>
</dbReference>
<dbReference type="InterPro" id="IPR001874">
    <property type="entry name" value="DHquinase_II"/>
</dbReference>
<dbReference type="InterPro" id="IPR018509">
    <property type="entry name" value="DHquinase_II_CS"/>
</dbReference>
<dbReference type="InterPro" id="IPR036441">
    <property type="entry name" value="DHquinase_II_sf"/>
</dbReference>
<dbReference type="NCBIfam" id="TIGR01088">
    <property type="entry name" value="aroQ"/>
    <property type="match status" value="1"/>
</dbReference>
<dbReference type="NCBIfam" id="NF003805">
    <property type="entry name" value="PRK05395.1-2"/>
    <property type="match status" value="1"/>
</dbReference>
<dbReference type="NCBIfam" id="NF003806">
    <property type="entry name" value="PRK05395.1-3"/>
    <property type="match status" value="1"/>
</dbReference>
<dbReference type="NCBIfam" id="NF003807">
    <property type="entry name" value="PRK05395.1-4"/>
    <property type="match status" value="1"/>
</dbReference>
<dbReference type="PANTHER" id="PTHR21272">
    <property type="entry name" value="CATABOLIC 3-DEHYDROQUINASE"/>
    <property type="match status" value="1"/>
</dbReference>
<dbReference type="PANTHER" id="PTHR21272:SF3">
    <property type="entry name" value="CATABOLIC 3-DEHYDROQUINASE"/>
    <property type="match status" value="1"/>
</dbReference>
<dbReference type="Pfam" id="PF01220">
    <property type="entry name" value="DHquinase_II"/>
    <property type="match status" value="1"/>
</dbReference>
<dbReference type="PIRSF" id="PIRSF001399">
    <property type="entry name" value="DHquinase_II"/>
    <property type="match status" value="1"/>
</dbReference>
<dbReference type="SUPFAM" id="SSF52304">
    <property type="entry name" value="Type II 3-dehydroquinate dehydratase"/>
    <property type="match status" value="1"/>
</dbReference>
<dbReference type="PROSITE" id="PS01029">
    <property type="entry name" value="DEHYDROQUINASE_II"/>
    <property type="match status" value="1"/>
</dbReference>
<proteinExistence type="inferred from homology"/>
<comment type="function">
    <text evidence="1">Catalyzes a trans-dehydration via an enolate intermediate.</text>
</comment>
<comment type="catalytic activity">
    <reaction evidence="1">
        <text>3-dehydroquinate = 3-dehydroshikimate + H2O</text>
        <dbReference type="Rhea" id="RHEA:21096"/>
        <dbReference type="ChEBI" id="CHEBI:15377"/>
        <dbReference type="ChEBI" id="CHEBI:16630"/>
        <dbReference type="ChEBI" id="CHEBI:32364"/>
        <dbReference type="EC" id="4.2.1.10"/>
    </reaction>
</comment>
<comment type="pathway">
    <text evidence="1">Metabolic intermediate biosynthesis; chorismate biosynthesis; chorismate from D-erythrose 4-phosphate and phosphoenolpyruvate: step 3/7.</text>
</comment>
<comment type="subunit">
    <text evidence="1">Homododecamer.</text>
</comment>
<comment type="similarity">
    <text evidence="1">Belongs to the type-II 3-dehydroquinase family.</text>
</comment>
<sequence length="162" mass="17933">MKIVVIQGPNLNMLGIREQNIYGPMKLEDIHKQMKGFAEQNKLEIEFFQSNLEGEIVDRIQECIGDADGIIINPAAYTHTSIAIRDAIAAVQLPTLEVHLSNIHQREEFRHKSLIAPVCAGQIVGMGPFGYHLAMVGMTQILSEVAAMREQQAKAQAAAQQK</sequence>
<feature type="chain" id="PRO_1000023522" description="3-dehydroquinate dehydratase">
    <location>
        <begin position="1"/>
        <end position="162"/>
    </location>
</feature>
<feature type="active site" description="Proton acceptor" evidence="1">
    <location>
        <position position="22"/>
    </location>
</feature>
<feature type="active site" description="Proton donor" evidence="1">
    <location>
        <position position="99"/>
    </location>
</feature>
<feature type="binding site" evidence="1">
    <location>
        <position position="73"/>
    </location>
    <ligand>
        <name>substrate</name>
    </ligand>
</feature>
<feature type="binding site" evidence="1">
    <location>
        <position position="79"/>
    </location>
    <ligand>
        <name>substrate</name>
    </ligand>
</feature>
<feature type="binding site" evidence="1">
    <location>
        <position position="86"/>
    </location>
    <ligand>
        <name>substrate</name>
    </ligand>
</feature>
<feature type="binding site" evidence="1">
    <location>
        <begin position="100"/>
        <end position="101"/>
    </location>
    <ligand>
        <name>substrate</name>
    </ligand>
</feature>
<feature type="binding site" evidence="1">
    <location>
        <position position="110"/>
    </location>
    <ligand>
        <name>substrate</name>
    </ligand>
</feature>
<feature type="site" description="Transition state stabilizer" evidence="1">
    <location>
        <position position="17"/>
    </location>
</feature>
<organism>
    <name type="scientific">Sulfurovum sp. (strain NBC37-1)</name>
    <dbReference type="NCBI Taxonomy" id="387093"/>
    <lineage>
        <taxon>Bacteria</taxon>
        <taxon>Pseudomonadati</taxon>
        <taxon>Campylobacterota</taxon>
        <taxon>Epsilonproteobacteria</taxon>
        <taxon>Campylobacterales</taxon>
        <taxon>Sulfurovaceae</taxon>
        <taxon>Sulfurovum</taxon>
    </lineage>
</organism>